<proteinExistence type="evidence at transcript level"/>
<keyword id="KW-0010">Activator</keyword>
<keyword id="KW-0175">Coiled coil</keyword>
<keyword id="KW-0217">Developmental protein</keyword>
<keyword id="KW-0221">Differentiation</keyword>
<keyword id="KW-0238">DNA-binding</keyword>
<keyword id="KW-0287">Flowering</keyword>
<keyword id="KW-0539">Nucleus</keyword>
<keyword id="KW-0804">Transcription</keyword>
<keyword id="KW-0805">Transcription regulation</keyword>
<sequence length="256" mass="30123">MGRGRVQLKRIENKINRQVTFSKRRAGLFKKAHEISVLCDAEVALVVFSHKGKLFEYSTDSCMEKILERYERYSYAERQLIAPESDVNTNWSMEYNRLKAKIELLERNQRHYLGEDLQAMSPKELQNLEQQLDTALKHIRSRKNQLMYDSVNELQRKEKAIQEQNSMLSKQIKEREKVLMAQQEQWDQQNHGQNMPSPPPPQQHQIQHPYMLSHQPSPFLNMGGLYQEEDPMAMRRNDLDLSLEPVYNCNLGCFAA</sequence>
<accession>Q8GTF4</accession>
<comment type="function">
    <text evidence="1">Transcription factor that promotes early floral meristem identity in synergy with LEAFY. Displays a redundant function with CAULIFLOWER in the up-regulation of LEAFY. Required subsequently for the transition of an inflorescence meristem into a floral meristem, and for the normal development of sepals and petals in flowers. Regulates positively B class homeotic proteins (By similarity).</text>
</comment>
<comment type="subunit">
    <text evidence="1">Homodimer capable of binding to CArG-box sequences.</text>
</comment>
<comment type="subcellular location">
    <subcellularLocation>
        <location evidence="2">Nucleus</location>
    </subcellularLocation>
</comment>
<comment type="tissue specificity">
    <text evidence="5">Expressed in some of the meristems of arrest-stage cauliflower heads.</text>
</comment>
<comment type="developmental stage">
    <text evidence="4">Accumulates in floral primordia and is maintained at a maximal level at the floral bud stage of arrest.</text>
</comment>
<evidence type="ECO:0000250" key="1"/>
<evidence type="ECO:0000255" key="2">
    <source>
        <dbReference type="PROSITE-ProRule" id="PRU00251"/>
    </source>
</evidence>
<evidence type="ECO:0000255" key="3">
    <source>
        <dbReference type="PROSITE-ProRule" id="PRU00629"/>
    </source>
</evidence>
<evidence type="ECO:0000269" key="4">
    <source>
    </source>
</evidence>
<evidence type="ECO:0000269" key="5">
    <source>
    </source>
</evidence>
<gene>
    <name type="primary">AP1C</name>
</gene>
<organism>
    <name type="scientific">Brassica oleracea var. botrytis</name>
    <name type="common">Cauliflower</name>
    <dbReference type="NCBI Taxonomy" id="3715"/>
    <lineage>
        <taxon>Eukaryota</taxon>
        <taxon>Viridiplantae</taxon>
        <taxon>Streptophyta</taxon>
        <taxon>Embryophyta</taxon>
        <taxon>Tracheophyta</taxon>
        <taxon>Spermatophyta</taxon>
        <taxon>Magnoliopsida</taxon>
        <taxon>eudicotyledons</taxon>
        <taxon>Gunneridae</taxon>
        <taxon>Pentapetalae</taxon>
        <taxon>rosids</taxon>
        <taxon>malvids</taxon>
        <taxon>Brassicales</taxon>
        <taxon>Brassicaceae</taxon>
        <taxon>Brassiceae</taxon>
        <taxon>Brassica</taxon>
    </lineage>
</organism>
<feature type="chain" id="PRO_0000417134" description="Floral homeotic protein APETALA 1 C">
    <location>
        <begin position="1"/>
        <end position="256"/>
    </location>
</feature>
<feature type="domain" description="MADS-box" evidence="2">
    <location>
        <begin position="1"/>
        <end position="61"/>
    </location>
</feature>
<feature type="domain" description="K-box" evidence="3">
    <location>
        <begin position="88"/>
        <end position="178"/>
    </location>
</feature>
<protein>
    <recommendedName>
        <fullName>Floral homeotic protein APETALA 1 C</fullName>
        <shortName>BoAP1-c</shortName>
        <shortName>BobAP1-c</shortName>
    </recommendedName>
    <alternativeName>
        <fullName>Agamous-like MADS-box protein AP1-C</fullName>
    </alternativeName>
</protein>
<dbReference type="EMBL" id="AJ505846">
    <property type="protein sequence ID" value="CAD47854.1"/>
    <property type="molecule type" value="mRNA"/>
</dbReference>
<dbReference type="SMR" id="Q8GTF4"/>
<dbReference type="GO" id="GO:0005634">
    <property type="term" value="C:nucleus"/>
    <property type="evidence" value="ECO:0007669"/>
    <property type="project" value="UniProtKB-SubCell"/>
</dbReference>
<dbReference type="GO" id="GO:0003700">
    <property type="term" value="F:DNA-binding transcription factor activity"/>
    <property type="evidence" value="ECO:0007669"/>
    <property type="project" value="InterPro"/>
</dbReference>
<dbReference type="GO" id="GO:0046983">
    <property type="term" value="F:protein dimerization activity"/>
    <property type="evidence" value="ECO:0007669"/>
    <property type="project" value="InterPro"/>
</dbReference>
<dbReference type="GO" id="GO:0000977">
    <property type="term" value="F:RNA polymerase II transcription regulatory region sequence-specific DNA binding"/>
    <property type="evidence" value="ECO:0007669"/>
    <property type="project" value="InterPro"/>
</dbReference>
<dbReference type="GO" id="GO:0030154">
    <property type="term" value="P:cell differentiation"/>
    <property type="evidence" value="ECO:0007669"/>
    <property type="project" value="UniProtKB-KW"/>
</dbReference>
<dbReference type="GO" id="GO:0009908">
    <property type="term" value="P:flower development"/>
    <property type="evidence" value="ECO:0007669"/>
    <property type="project" value="UniProtKB-KW"/>
</dbReference>
<dbReference type="GO" id="GO:0045944">
    <property type="term" value="P:positive regulation of transcription by RNA polymerase II"/>
    <property type="evidence" value="ECO:0007669"/>
    <property type="project" value="InterPro"/>
</dbReference>
<dbReference type="CDD" id="cd00265">
    <property type="entry name" value="MADS_MEF2_like"/>
    <property type="match status" value="1"/>
</dbReference>
<dbReference type="FunFam" id="3.40.1810.10:FF:000003">
    <property type="entry name" value="MADS-box transcription factor MADS-MC"/>
    <property type="match status" value="1"/>
</dbReference>
<dbReference type="Gene3D" id="3.40.1810.10">
    <property type="entry name" value="Transcription factor, MADS-box"/>
    <property type="match status" value="1"/>
</dbReference>
<dbReference type="InterPro" id="IPR050142">
    <property type="entry name" value="MADS-box/MEF2_TF"/>
</dbReference>
<dbReference type="InterPro" id="IPR033896">
    <property type="entry name" value="MEF2-like_N"/>
</dbReference>
<dbReference type="InterPro" id="IPR002487">
    <property type="entry name" value="TF_Kbox"/>
</dbReference>
<dbReference type="InterPro" id="IPR002100">
    <property type="entry name" value="TF_MADSbox"/>
</dbReference>
<dbReference type="InterPro" id="IPR036879">
    <property type="entry name" value="TF_MADSbox_sf"/>
</dbReference>
<dbReference type="PANTHER" id="PTHR48019">
    <property type="entry name" value="SERUM RESPONSE FACTOR HOMOLOG"/>
    <property type="match status" value="1"/>
</dbReference>
<dbReference type="Pfam" id="PF01486">
    <property type="entry name" value="K-box"/>
    <property type="match status" value="1"/>
</dbReference>
<dbReference type="Pfam" id="PF00319">
    <property type="entry name" value="SRF-TF"/>
    <property type="match status" value="1"/>
</dbReference>
<dbReference type="PRINTS" id="PR00404">
    <property type="entry name" value="MADSDOMAIN"/>
</dbReference>
<dbReference type="SMART" id="SM00432">
    <property type="entry name" value="MADS"/>
    <property type="match status" value="1"/>
</dbReference>
<dbReference type="SUPFAM" id="SSF55455">
    <property type="entry name" value="SRF-like"/>
    <property type="match status" value="1"/>
</dbReference>
<dbReference type="PROSITE" id="PS51297">
    <property type="entry name" value="K_BOX"/>
    <property type="match status" value="1"/>
</dbReference>
<dbReference type="PROSITE" id="PS00350">
    <property type="entry name" value="MADS_BOX_1"/>
    <property type="match status" value="1"/>
</dbReference>
<dbReference type="PROSITE" id="PS50066">
    <property type="entry name" value="MADS_BOX_2"/>
    <property type="match status" value="1"/>
</dbReference>
<reference key="1">
    <citation type="thesis" date="2002" institute="University of Warwick" country="United Kingdom">
        <title>MADS-box genes and the genetics of cauliflower curd development.</title>
        <authorList>
            <person name="Kop E.P."/>
        </authorList>
    </citation>
    <scope>NUCLEOTIDE SEQUENCE [MRNA]</scope>
    <source>
        <strain>cv. CA25</strain>
        <tissue>Flower bud</tissue>
    </source>
</reference>
<reference key="2">
    <citation type="journal article" date="1997" name="Planta">
        <title>Floral homeotic gene expression defines developmental arrest stages in Brassica oleracea L. vars. botrytis and italica.</title>
        <authorList>
            <person name="Carr S.M."/>
            <person name="Irish V.F."/>
        </authorList>
    </citation>
    <scope>TISSUE SPECIFICITY</scope>
    <source>
        <strain>cv. Early Snowball</strain>
    </source>
</reference>
<reference key="3">
    <citation type="journal article" date="2008" name="J. Exp. Bot.">
        <title>Meristem identity gene expression during curd proliferation and flower initiation in Brassica oleracea.</title>
        <authorList>
            <person name="Duclos D.V."/>
            <person name="Bjoerkman T."/>
        </authorList>
    </citation>
    <scope>DEVELOPMENTAL STAGE</scope>
</reference>
<name>AP1C_BRAOB</name>